<reference key="1">
    <citation type="journal article" date="2009" name="J. Bacteriol.">
        <title>Complete and draft genome sequences of six members of the Aquificales.</title>
        <authorList>
            <person name="Reysenbach A.-L."/>
            <person name="Hamamura N."/>
            <person name="Podar M."/>
            <person name="Griffiths E."/>
            <person name="Ferreira S."/>
            <person name="Hochstein R."/>
            <person name="Heidelberg J."/>
            <person name="Johnson J."/>
            <person name="Mead D."/>
            <person name="Pohorille A."/>
            <person name="Sarmiento M."/>
            <person name="Schweighofer K."/>
            <person name="Seshadri R."/>
            <person name="Voytek M.A."/>
        </authorList>
    </citation>
    <scope>NUCLEOTIDE SEQUENCE [LARGE SCALE GENOMIC DNA]</scope>
    <source>
        <strain>Y04AAS1</strain>
    </source>
</reference>
<sequence>MKLKPIYDKIVVKRMEEKEQKTPSGIIIPDTAKEKPQVGEVIAVGNGKVLNNGEIRPLAVNVGDKVLFNKYAGTEVELDGEKYLVMAEDEVLAIIE</sequence>
<feature type="chain" id="PRO_1000129671" description="Co-chaperonin GroES">
    <location>
        <begin position="1"/>
        <end position="96"/>
    </location>
</feature>
<comment type="function">
    <text evidence="1">Together with the chaperonin GroEL, plays an essential role in assisting protein folding. The GroEL-GroES system forms a nano-cage that allows encapsulation of the non-native substrate proteins and provides a physical environment optimized to promote and accelerate protein folding. GroES binds to the apical surface of the GroEL ring, thereby capping the opening of the GroEL channel.</text>
</comment>
<comment type="subunit">
    <text evidence="1">Heptamer of 7 subunits arranged in a ring. Interacts with the chaperonin GroEL.</text>
</comment>
<comment type="subcellular location">
    <subcellularLocation>
        <location evidence="1">Cytoplasm</location>
    </subcellularLocation>
</comment>
<comment type="similarity">
    <text evidence="1">Belongs to the GroES chaperonin family.</text>
</comment>
<name>CH10_HYDS0</name>
<evidence type="ECO:0000255" key="1">
    <source>
        <dbReference type="HAMAP-Rule" id="MF_00580"/>
    </source>
</evidence>
<dbReference type="EMBL" id="CP001130">
    <property type="protein sequence ID" value="ACG57546.1"/>
    <property type="molecule type" value="Genomic_DNA"/>
</dbReference>
<dbReference type="RefSeq" id="WP_012513902.1">
    <property type="nucleotide sequence ID" value="NC_011126.1"/>
</dbReference>
<dbReference type="SMR" id="B4U8T5"/>
<dbReference type="STRING" id="380749.HY04AAS1_0859"/>
<dbReference type="KEGG" id="hya:HY04AAS1_0859"/>
<dbReference type="eggNOG" id="COG0234">
    <property type="taxonomic scope" value="Bacteria"/>
</dbReference>
<dbReference type="HOGENOM" id="CLU_132825_2_0_0"/>
<dbReference type="OrthoDB" id="9806791at2"/>
<dbReference type="GO" id="GO:0005737">
    <property type="term" value="C:cytoplasm"/>
    <property type="evidence" value="ECO:0007669"/>
    <property type="project" value="UniProtKB-SubCell"/>
</dbReference>
<dbReference type="GO" id="GO:0005524">
    <property type="term" value="F:ATP binding"/>
    <property type="evidence" value="ECO:0007669"/>
    <property type="project" value="InterPro"/>
</dbReference>
<dbReference type="GO" id="GO:0046872">
    <property type="term" value="F:metal ion binding"/>
    <property type="evidence" value="ECO:0007669"/>
    <property type="project" value="TreeGrafter"/>
</dbReference>
<dbReference type="GO" id="GO:0044183">
    <property type="term" value="F:protein folding chaperone"/>
    <property type="evidence" value="ECO:0007669"/>
    <property type="project" value="InterPro"/>
</dbReference>
<dbReference type="GO" id="GO:0051087">
    <property type="term" value="F:protein-folding chaperone binding"/>
    <property type="evidence" value="ECO:0007669"/>
    <property type="project" value="TreeGrafter"/>
</dbReference>
<dbReference type="GO" id="GO:0051082">
    <property type="term" value="F:unfolded protein binding"/>
    <property type="evidence" value="ECO:0007669"/>
    <property type="project" value="TreeGrafter"/>
</dbReference>
<dbReference type="GO" id="GO:0051085">
    <property type="term" value="P:chaperone cofactor-dependent protein refolding"/>
    <property type="evidence" value="ECO:0007669"/>
    <property type="project" value="TreeGrafter"/>
</dbReference>
<dbReference type="CDD" id="cd00320">
    <property type="entry name" value="cpn10"/>
    <property type="match status" value="1"/>
</dbReference>
<dbReference type="FunFam" id="2.30.33.40:FF:000001">
    <property type="entry name" value="10 kDa chaperonin"/>
    <property type="match status" value="1"/>
</dbReference>
<dbReference type="Gene3D" id="2.30.33.40">
    <property type="entry name" value="GroES chaperonin"/>
    <property type="match status" value="1"/>
</dbReference>
<dbReference type="HAMAP" id="MF_00580">
    <property type="entry name" value="CH10"/>
    <property type="match status" value="1"/>
</dbReference>
<dbReference type="InterPro" id="IPR020818">
    <property type="entry name" value="Chaperonin_GroES"/>
</dbReference>
<dbReference type="InterPro" id="IPR037124">
    <property type="entry name" value="Chaperonin_GroES_sf"/>
</dbReference>
<dbReference type="InterPro" id="IPR011032">
    <property type="entry name" value="GroES-like_sf"/>
</dbReference>
<dbReference type="NCBIfam" id="NF001527">
    <property type="entry name" value="PRK00364.1-2"/>
    <property type="match status" value="1"/>
</dbReference>
<dbReference type="NCBIfam" id="NF001531">
    <property type="entry name" value="PRK00364.2-2"/>
    <property type="match status" value="1"/>
</dbReference>
<dbReference type="NCBIfam" id="NF001533">
    <property type="entry name" value="PRK00364.2-4"/>
    <property type="match status" value="1"/>
</dbReference>
<dbReference type="NCBIfam" id="NF001534">
    <property type="entry name" value="PRK00364.2-5"/>
    <property type="match status" value="1"/>
</dbReference>
<dbReference type="PANTHER" id="PTHR10772">
    <property type="entry name" value="10 KDA HEAT SHOCK PROTEIN"/>
    <property type="match status" value="1"/>
</dbReference>
<dbReference type="PANTHER" id="PTHR10772:SF58">
    <property type="entry name" value="CO-CHAPERONIN GROES"/>
    <property type="match status" value="1"/>
</dbReference>
<dbReference type="Pfam" id="PF00166">
    <property type="entry name" value="Cpn10"/>
    <property type="match status" value="1"/>
</dbReference>
<dbReference type="PRINTS" id="PR00297">
    <property type="entry name" value="CHAPERONIN10"/>
</dbReference>
<dbReference type="SMART" id="SM00883">
    <property type="entry name" value="Cpn10"/>
    <property type="match status" value="1"/>
</dbReference>
<dbReference type="SUPFAM" id="SSF50129">
    <property type="entry name" value="GroES-like"/>
    <property type="match status" value="1"/>
</dbReference>
<proteinExistence type="inferred from homology"/>
<accession>B4U8T5</accession>
<protein>
    <recommendedName>
        <fullName evidence="1">Co-chaperonin GroES</fullName>
    </recommendedName>
    <alternativeName>
        <fullName evidence="1">10 kDa chaperonin</fullName>
    </alternativeName>
    <alternativeName>
        <fullName evidence="1">Chaperonin-10</fullName>
        <shortName evidence="1">Cpn10</shortName>
    </alternativeName>
</protein>
<organism>
    <name type="scientific">Hydrogenobaculum sp. (strain Y04AAS1)</name>
    <dbReference type="NCBI Taxonomy" id="380749"/>
    <lineage>
        <taxon>Bacteria</taxon>
        <taxon>Pseudomonadati</taxon>
        <taxon>Aquificota</taxon>
        <taxon>Aquificia</taxon>
        <taxon>Aquificales</taxon>
        <taxon>Aquificaceae</taxon>
        <taxon>Hydrogenobaculum</taxon>
    </lineage>
</organism>
<gene>
    <name evidence="1" type="primary">groES</name>
    <name evidence="1" type="synonym">groS</name>
    <name type="ordered locus">HY04AAS1_0859</name>
</gene>
<keyword id="KW-0143">Chaperone</keyword>
<keyword id="KW-0963">Cytoplasm</keyword>